<gene>
    <name type="primary">his-69</name>
    <name type="ORF">E03A3.3</name>
</gene>
<comment type="function">
    <text evidence="1">Putative variant histone H3 which may replace conventional H3 in a subset of nucleosomes. Nucleosomes wrap and compact DNA into chromatin, limiting DNA accessibility to the cellular machineries which require DNA as a template. Histones thereby play a central role in transcription regulation, DNA repair, DNA replication and chromosomal stability. DNA accessibility is regulated via a complex set of post-translational modifications of histones, also called histone code, and nucleosome remodeling (By similarity).</text>
</comment>
<comment type="subunit">
    <text evidence="1">The nucleosome is a histone octamer containing two molecules each of H2A, H2B, H3 and H4 assembled in one H3-H4 heterotetramer and two H2A-H2B heterodimers. The octamer wraps approximately 147 bp of DNA (By similarity).</text>
</comment>
<comment type="subcellular location">
    <subcellularLocation>
        <location evidence="1">Nucleus</location>
    </subcellularLocation>
    <subcellularLocation>
        <location evidence="1">Chromosome</location>
    </subcellularLocation>
</comment>
<comment type="PTM">
    <text evidence="1">Acetylation is generally linked to gene activation.</text>
</comment>
<comment type="disruption phenotype">
    <text evidence="2">Worms exhibit slow postembryonic growth.</text>
</comment>
<comment type="similarity">
    <text evidence="3">Belongs to the histone H3 family.</text>
</comment>
<comment type="caution">
    <text evidence="3">Could be the product of a pseudogene.</text>
</comment>
<evidence type="ECO:0000250" key="1"/>
<evidence type="ECO:0000269" key="2">
    <source>
    </source>
</evidence>
<evidence type="ECO:0000305" key="3"/>
<protein>
    <recommendedName>
        <fullName>Putative histone H3.3-like type 3</fullName>
    </recommendedName>
</protein>
<accession>Q27489</accession>
<name>H33L3_CAEEL</name>
<organism>
    <name type="scientific">Caenorhabditis elegans</name>
    <dbReference type="NCBI Taxonomy" id="6239"/>
    <lineage>
        <taxon>Eukaryota</taxon>
        <taxon>Metazoa</taxon>
        <taxon>Ecdysozoa</taxon>
        <taxon>Nematoda</taxon>
        <taxon>Chromadorea</taxon>
        <taxon>Rhabditida</taxon>
        <taxon>Rhabditina</taxon>
        <taxon>Rhabditomorpha</taxon>
        <taxon>Rhabditoidea</taxon>
        <taxon>Rhabditidae</taxon>
        <taxon>Peloderinae</taxon>
        <taxon>Caenorhabditis</taxon>
    </lineage>
</organism>
<keyword id="KW-0007">Acetylation</keyword>
<keyword id="KW-0158">Chromosome</keyword>
<keyword id="KW-0238">DNA-binding</keyword>
<keyword id="KW-0488">Methylation</keyword>
<keyword id="KW-0544">Nucleosome core</keyword>
<keyword id="KW-0539">Nucleus</keyword>
<keyword id="KW-1185">Reference proteome</keyword>
<feature type="chain" id="PRO_0000268635" description="Putative histone H3.3-like type 3">
    <location>
        <begin position="1"/>
        <end position="127"/>
    </location>
</feature>
<feature type="modified residue" description="N6-acetyllysine" evidence="1">
    <location>
        <position position="6"/>
    </location>
</feature>
<feature type="modified residue" description="N6-acetyllysine" evidence="1">
    <location>
        <position position="15"/>
    </location>
</feature>
<feature type="modified residue" description="N6-methylated lysine" evidence="1">
    <location>
        <position position="19"/>
    </location>
</feature>
<feature type="modified residue" description="N6-methylated lysine" evidence="1">
    <location>
        <position position="28"/>
    </location>
</feature>
<feature type="modified residue" description="N6-methylated lysine" evidence="1">
    <location>
        <position position="71"/>
    </location>
</feature>
<sequence>MCPGGKAPRKQLATKAARKNAIVVGAVKKPHRFRPGTVALREIRRYQKSTDLLLRKLPFQRLVREIAQDVKQDLRFQSAAIQALQEASEYFLVGLFEDTNLCAIHAKRVTIMPKDMQLARRIRGERN</sequence>
<proteinExistence type="uncertain"/>
<dbReference type="EMBL" id="Z38112">
    <property type="protein sequence ID" value="CAA86228.1"/>
    <property type="molecule type" value="Genomic_DNA"/>
</dbReference>
<dbReference type="PIR" id="T20426">
    <property type="entry name" value="T20426"/>
</dbReference>
<dbReference type="RefSeq" id="NP_497811.1">
    <property type="nucleotide sequence ID" value="NM_065410.3"/>
</dbReference>
<dbReference type="SMR" id="Q27489"/>
<dbReference type="BioGRID" id="48808">
    <property type="interactions" value="2"/>
</dbReference>
<dbReference type="FunCoup" id="Q27489">
    <property type="interactions" value="1"/>
</dbReference>
<dbReference type="STRING" id="6239.E03A3.3.1"/>
<dbReference type="PaxDb" id="6239-E03A3.3"/>
<dbReference type="PeptideAtlas" id="Q27489"/>
<dbReference type="EnsemblMetazoa" id="E03A3.3.1">
    <property type="protein sequence ID" value="E03A3.3.1"/>
    <property type="gene ID" value="WBGene00001943"/>
</dbReference>
<dbReference type="GeneID" id="184005"/>
<dbReference type="KEGG" id="cel:CELE_E03A3.3"/>
<dbReference type="UCSC" id="E03A3.3">
    <property type="organism name" value="c. elegans"/>
</dbReference>
<dbReference type="AGR" id="WB:WBGene00001943"/>
<dbReference type="CTD" id="184005"/>
<dbReference type="WormBase" id="E03A3.3">
    <property type="protein sequence ID" value="CE00942"/>
    <property type="gene ID" value="WBGene00001943"/>
    <property type="gene designation" value="his-69"/>
</dbReference>
<dbReference type="eggNOG" id="KOG1745">
    <property type="taxonomic scope" value="Eukaryota"/>
</dbReference>
<dbReference type="GeneTree" id="ENSGT01110000267215"/>
<dbReference type="HOGENOM" id="CLU_078295_4_0_1"/>
<dbReference type="InParanoid" id="Q27489"/>
<dbReference type="OrthoDB" id="4025405at2759"/>
<dbReference type="PhylomeDB" id="Q27489"/>
<dbReference type="Proteomes" id="UP000001940">
    <property type="component" value="Chromosome III"/>
</dbReference>
<dbReference type="Bgee" id="WBGene00001943">
    <property type="expression patterns" value="Expressed in anatomical system and 3 other cell types or tissues"/>
</dbReference>
<dbReference type="GO" id="GO:0000786">
    <property type="term" value="C:nucleosome"/>
    <property type="evidence" value="ECO:0007669"/>
    <property type="project" value="UniProtKB-KW"/>
</dbReference>
<dbReference type="GO" id="GO:0005634">
    <property type="term" value="C:nucleus"/>
    <property type="evidence" value="ECO:0000318"/>
    <property type="project" value="GO_Central"/>
</dbReference>
<dbReference type="GO" id="GO:0003677">
    <property type="term" value="F:DNA binding"/>
    <property type="evidence" value="ECO:0007669"/>
    <property type="project" value="UniProtKB-KW"/>
</dbReference>
<dbReference type="GO" id="GO:0046982">
    <property type="term" value="F:protein heterodimerization activity"/>
    <property type="evidence" value="ECO:0007669"/>
    <property type="project" value="InterPro"/>
</dbReference>
<dbReference type="GO" id="GO:0030527">
    <property type="term" value="F:structural constituent of chromatin"/>
    <property type="evidence" value="ECO:0007669"/>
    <property type="project" value="InterPro"/>
</dbReference>
<dbReference type="CDD" id="cd22911">
    <property type="entry name" value="HFD_H3"/>
    <property type="match status" value="1"/>
</dbReference>
<dbReference type="FunFam" id="1.10.20.10:FF:000001">
    <property type="entry name" value="Histone H3"/>
    <property type="match status" value="1"/>
</dbReference>
<dbReference type="Gene3D" id="1.10.20.10">
    <property type="entry name" value="Histone, subunit A"/>
    <property type="match status" value="1"/>
</dbReference>
<dbReference type="InterPro" id="IPR009072">
    <property type="entry name" value="Histone-fold"/>
</dbReference>
<dbReference type="InterPro" id="IPR007125">
    <property type="entry name" value="Histone_H2A/H2B/H3"/>
</dbReference>
<dbReference type="InterPro" id="IPR000164">
    <property type="entry name" value="Histone_H3/CENP-A"/>
</dbReference>
<dbReference type="PANTHER" id="PTHR11426">
    <property type="entry name" value="HISTONE H3"/>
    <property type="match status" value="1"/>
</dbReference>
<dbReference type="Pfam" id="PF00125">
    <property type="entry name" value="Histone"/>
    <property type="match status" value="1"/>
</dbReference>
<dbReference type="PRINTS" id="PR00622">
    <property type="entry name" value="HISTONEH3"/>
</dbReference>
<dbReference type="SMART" id="SM00428">
    <property type="entry name" value="H3"/>
    <property type="match status" value="1"/>
</dbReference>
<dbReference type="SUPFAM" id="SSF47113">
    <property type="entry name" value="Histone-fold"/>
    <property type="match status" value="1"/>
</dbReference>
<dbReference type="PROSITE" id="PS00322">
    <property type="entry name" value="HISTONE_H3_1"/>
    <property type="match status" value="1"/>
</dbReference>
<dbReference type="PROSITE" id="PS00959">
    <property type="entry name" value="HISTONE_H3_2"/>
    <property type="match status" value="1"/>
</dbReference>
<reference key="1">
    <citation type="journal article" date="1998" name="Science">
        <title>Genome sequence of the nematode C. elegans: a platform for investigating biology.</title>
        <authorList>
            <consortium name="The C. elegans sequencing consortium"/>
        </authorList>
    </citation>
    <scope>NUCLEOTIDE SEQUENCE [LARGE SCALE GENOMIC DNA]</scope>
    <source>
        <strain>Bristol N2</strain>
    </source>
</reference>
<reference key="2">
    <citation type="journal article" date="2003" name="PLoS Biol.">
        <title>Genome-wide RNAi of C. elegans using the hypersensitive rrf-3 strain reveals novel gene functions.</title>
        <authorList>
            <person name="Simmer F."/>
            <person name="Moorman C."/>
            <person name="van der Linden A.M."/>
            <person name="Kuijk E."/>
            <person name="van den Berghe P.V.E."/>
            <person name="Kamath R.S."/>
            <person name="Fraser A.G."/>
            <person name="Ahringer J."/>
            <person name="Plasterk R.H.A."/>
        </authorList>
    </citation>
    <scope>DISRUPTION PHENOTYPE</scope>
</reference>
<reference key="3">
    <citation type="journal article" date="2006" name="PLoS Genet.">
        <title>Histone H3.3 variant dynamics in the germline of Caenorhabditis elegans.</title>
        <authorList>
            <person name="Ooi S.L."/>
            <person name="Priess J.R."/>
            <person name="Henikoff S."/>
        </authorList>
    </citation>
    <scope>IDENTIFICATION</scope>
</reference>